<proteinExistence type="inferred from homology"/>
<organism>
    <name type="scientific">Thermosipho melanesiensis (strain DSM 12029 / CIP 104789 / BI429)</name>
    <dbReference type="NCBI Taxonomy" id="391009"/>
    <lineage>
        <taxon>Bacteria</taxon>
        <taxon>Thermotogati</taxon>
        <taxon>Thermotogota</taxon>
        <taxon>Thermotogae</taxon>
        <taxon>Thermotogales</taxon>
        <taxon>Fervidobacteriaceae</taxon>
        <taxon>Thermosipho</taxon>
    </lineage>
</organism>
<feature type="chain" id="PRO_1000002588" description="Holliday junction branch migration complex subunit RuvA">
    <location>
        <begin position="1"/>
        <end position="189"/>
    </location>
</feature>
<feature type="region of interest" description="Domain I" evidence="1">
    <location>
        <begin position="1"/>
        <end position="63"/>
    </location>
</feature>
<feature type="region of interest" description="Domain II" evidence="1">
    <location>
        <begin position="64"/>
        <end position="135"/>
    </location>
</feature>
<feature type="region of interest" description="Flexible linker" evidence="1">
    <location>
        <begin position="135"/>
        <end position="139"/>
    </location>
</feature>
<feature type="region of interest" description="Domain III" evidence="1">
    <location>
        <begin position="140"/>
        <end position="189"/>
    </location>
</feature>
<comment type="function">
    <text evidence="1">The RuvA-RuvB-RuvC complex processes Holliday junction (HJ) DNA during genetic recombination and DNA repair, while the RuvA-RuvB complex plays an important role in the rescue of blocked DNA replication forks via replication fork reversal (RFR). RuvA specifically binds to HJ cruciform DNA, conferring on it an open structure. The RuvB hexamer acts as an ATP-dependent pump, pulling dsDNA into and through the RuvAB complex. HJ branch migration allows RuvC to scan DNA until it finds its consensus sequence, where it cleaves and resolves the cruciform DNA.</text>
</comment>
<comment type="subunit">
    <text evidence="1">Homotetramer. Forms an RuvA(8)-RuvB(12)-Holliday junction (HJ) complex. HJ DNA is sandwiched between 2 RuvA tetramers; dsDNA enters through RuvA and exits via RuvB. An RuvB hexamer assembles on each DNA strand where it exits the tetramer. Each RuvB hexamer is contacted by two RuvA subunits (via domain III) on 2 adjacent RuvB subunits; this complex drives branch migration. In the full resolvosome a probable DNA-RuvA(4)-RuvB(12)-RuvC(2) complex forms which resolves the HJ.</text>
</comment>
<comment type="subcellular location">
    <subcellularLocation>
        <location evidence="1">Cytoplasm</location>
    </subcellularLocation>
</comment>
<comment type="domain">
    <text evidence="1">Has three domains with a flexible linker between the domains II and III and assumes an 'L' shape. Domain III is highly mobile and contacts RuvB.</text>
</comment>
<comment type="similarity">
    <text evidence="1">Belongs to the RuvA family.</text>
</comment>
<keyword id="KW-0963">Cytoplasm</keyword>
<keyword id="KW-0227">DNA damage</keyword>
<keyword id="KW-0233">DNA recombination</keyword>
<keyword id="KW-0234">DNA repair</keyword>
<keyword id="KW-0238">DNA-binding</keyword>
<reference key="1">
    <citation type="submission" date="2007-05" db="EMBL/GenBank/DDBJ databases">
        <title>Complete sequence of Thermosipho melanesiensis BI429.</title>
        <authorList>
            <consortium name="US DOE Joint Genome Institute"/>
            <person name="Copeland A."/>
            <person name="Lucas S."/>
            <person name="Lapidus A."/>
            <person name="Barry K."/>
            <person name="Glavina del Rio T."/>
            <person name="Dalin E."/>
            <person name="Tice H."/>
            <person name="Pitluck S."/>
            <person name="Chertkov O."/>
            <person name="Brettin T."/>
            <person name="Bruce D."/>
            <person name="Detter J.C."/>
            <person name="Han C."/>
            <person name="Schmutz J."/>
            <person name="Larimer F."/>
            <person name="Land M."/>
            <person name="Hauser L."/>
            <person name="Kyrpides N."/>
            <person name="Mikhailova N."/>
            <person name="Nelson K."/>
            <person name="Gogarten J.P."/>
            <person name="Noll K."/>
            <person name="Richardson P."/>
        </authorList>
    </citation>
    <scope>NUCLEOTIDE SEQUENCE [LARGE SCALE GENOMIC DNA]</scope>
    <source>
        <strain>DSM 12029 / CIP 104789 / BI429</strain>
    </source>
</reference>
<protein>
    <recommendedName>
        <fullName evidence="1">Holliday junction branch migration complex subunit RuvA</fullName>
    </recommendedName>
</protein>
<evidence type="ECO:0000255" key="1">
    <source>
        <dbReference type="HAMAP-Rule" id="MF_00031"/>
    </source>
</evidence>
<accession>A6LLH1</accession>
<sequence length="189" mass="21321">MIYAMYGVLEDIENGKLYLNVNEIVYEIVVGDTGYFEDFLNEKIKVFTKMIVNDDEISLYGFSDVLKLKLFEKLILVNKLGPKSALKIITSSDVSYIVSAIVNEDVKTLSTLPGIGPKTAERIILELKDSMKEFDVTLTEKDKKILEAIEALVTLGFSRNQSKKAVTQILKKDDSLDDIIKKALKFLSR</sequence>
<dbReference type="EMBL" id="CP000716">
    <property type="protein sequence ID" value="ABR30772.1"/>
    <property type="molecule type" value="Genomic_DNA"/>
</dbReference>
<dbReference type="RefSeq" id="WP_012057133.1">
    <property type="nucleotide sequence ID" value="NC_009616.1"/>
</dbReference>
<dbReference type="SMR" id="A6LLH1"/>
<dbReference type="STRING" id="391009.Tmel_0911"/>
<dbReference type="KEGG" id="tme:Tmel_0911"/>
<dbReference type="eggNOG" id="COG0632">
    <property type="taxonomic scope" value="Bacteria"/>
</dbReference>
<dbReference type="HOGENOM" id="CLU_087936_3_0_0"/>
<dbReference type="OrthoDB" id="5293449at2"/>
<dbReference type="Proteomes" id="UP000001110">
    <property type="component" value="Chromosome"/>
</dbReference>
<dbReference type="GO" id="GO:0005737">
    <property type="term" value="C:cytoplasm"/>
    <property type="evidence" value="ECO:0007669"/>
    <property type="project" value="UniProtKB-SubCell"/>
</dbReference>
<dbReference type="GO" id="GO:0009379">
    <property type="term" value="C:Holliday junction helicase complex"/>
    <property type="evidence" value="ECO:0007669"/>
    <property type="project" value="InterPro"/>
</dbReference>
<dbReference type="GO" id="GO:0048476">
    <property type="term" value="C:Holliday junction resolvase complex"/>
    <property type="evidence" value="ECO:0007669"/>
    <property type="project" value="UniProtKB-UniRule"/>
</dbReference>
<dbReference type="GO" id="GO:0005524">
    <property type="term" value="F:ATP binding"/>
    <property type="evidence" value="ECO:0007669"/>
    <property type="project" value="InterPro"/>
</dbReference>
<dbReference type="GO" id="GO:0000400">
    <property type="term" value="F:four-way junction DNA binding"/>
    <property type="evidence" value="ECO:0007669"/>
    <property type="project" value="UniProtKB-UniRule"/>
</dbReference>
<dbReference type="GO" id="GO:0009378">
    <property type="term" value="F:four-way junction helicase activity"/>
    <property type="evidence" value="ECO:0007669"/>
    <property type="project" value="InterPro"/>
</dbReference>
<dbReference type="GO" id="GO:0006310">
    <property type="term" value="P:DNA recombination"/>
    <property type="evidence" value="ECO:0007669"/>
    <property type="project" value="UniProtKB-UniRule"/>
</dbReference>
<dbReference type="GO" id="GO:0006281">
    <property type="term" value="P:DNA repair"/>
    <property type="evidence" value="ECO:0007669"/>
    <property type="project" value="UniProtKB-UniRule"/>
</dbReference>
<dbReference type="CDD" id="cd14332">
    <property type="entry name" value="UBA_RuvA_C"/>
    <property type="match status" value="1"/>
</dbReference>
<dbReference type="Gene3D" id="1.10.150.20">
    <property type="entry name" value="5' to 3' exonuclease, C-terminal subdomain"/>
    <property type="match status" value="1"/>
</dbReference>
<dbReference type="Gene3D" id="1.10.8.10">
    <property type="entry name" value="DNA helicase RuvA subunit, C-terminal domain"/>
    <property type="match status" value="1"/>
</dbReference>
<dbReference type="Gene3D" id="2.40.50.140">
    <property type="entry name" value="Nucleic acid-binding proteins"/>
    <property type="match status" value="1"/>
</dbReference>
<dbReference type="HAMAP" id="MF_00031">
    <property type="entry name" value="DNA_HJ_migration_RuvA"/>
    <property type="match status" value="1"/>
</dbReference>
<dbReference type="InterPro" id="IPR013849">
    <property type="entry name" value="DNA_helicase_Holl-junc_RuvA_I"/>
</dbReference>
<dbReference type="InterPro" id="IPR003583">
    <property type="entry name" value="Hlx-hairpin-Hlx_DNA-bd_motif"/>
</dbReference>
<dbReference type="InterPro" id="IPR012340">
    <property type="entry name" value="NA-bd_OB-fold"/>
</dbReference>
<dbReference type="InterPro" id="IPR000085">
    <property type="entry name" value="RuvA"/>
</dbReference>
<dbReference type="InterPro" id="IPR010994">
    <property type="entry name" value="RuvA_2-like"/>
</dbReference>
<dbReference type="InterPro" id="IPR011114">
    <property type="entry name" value="RuvA_C"/>
</dbReference>
<dbReference type="InterPro" id="IPR036267">
    <property type="entry name" value="RuvA_C_sf"/>
</dbReference>
<dbReference type="NCBIfam" id="TIGR00084">
    <property type="entry name" value="ruvA"/>
    <property type="match status" value="1"/>
</dbReference>
<dbReference type="Pfam" id="PF14520">
    <property type="entry name" value="HHH_5"/>
    <property type="match status" value="1"/>
</dbReference>
<dbReference type="Pfam" id="PF07499">
    <property type="entry name" value="RuvA_C"/>
    <property type="match status" value="1"/>
</dbReference>
<dbReference type="Pfam" id="PF01330">
    <property type="entry name" value="RuvA_N"/>
    <property type="match status" value="1"/>
</dbReference>
<dbReference type="SMART" id="SM00278">
    <property type="entry name" value="HhH1"/>
    <property type="match status" value="2"/>
</dbReference>
<dbReference type="SUPFAM" id="SSF46929">
    <property type="entry name" value="DNA helicase RuvA subunit, C-terminal domain"/>
    <property type="match status" value="1"/>
</dbReference>
<dbReference type="SUPFAM" id="SSF50249">
    <property type="entry name" value="Nucleic acid-binding proteins"/>
    <property type="match status" value="1"/>
</dbReference>
<dbReference type="SUPFAM" id="SSF47781">
    <property type="entry name" value="RuvA domain 2-like"/>
    <property type="match status" value="1"/>
</dbReference>
<name>RUVA_THEM4</name>
<gene>
    <name evidence="1" type="primary">ruvA</name>
    <name type="ordered locus">Tmel_0911</name>
</gene>